<keyword id="KW-0256">Endoplasmic reticulum</keyword>
<keyword id="KW-0456">Lyase</keyword>
<keyword id="KW-0472">Membrane</keyword>
<keyword id="KW-0521">NADP</keyword>
<keyword id="KW-1185">Reference proteome</keyword>
<keyword id="KW-0812">Transmembrane</keyword>
<keyword id="KW-1133">Transmembrane helix</keyword>
<dbReference type="EC" id="4.1.99.5" evidence="1"/>
<dbReference type="EMBL" id="AP004840">
    <property type="protein sequence ID" value="BAD28002.1"/>
    <property type="molecule type" value="Genomic_DNA"/>
</dbReference>
<dbReference type="EMBL" id="AP008208">
    <property type="protein sequence ID" value="BAF07994.1"/>
    <property type="molecule type" value="Genomic_DNA"/>
</dbReference>
<dbReference type="EMBL" id="AP014958">
    <property type="protein sequence ID" value="BAS77283.1"/>
    <property type="molecule type" value="Genomic_DNA"/>
</dbReference>
<dbReference type="EMBL" id="AP014958">
    <property type="protein sequence ID" value="BAS77284.1"/>
    <property type="molecule type" value="Genomic_DNA"/>
</dbReference>
<dbReference type="EMBL" id="AK066569">
    <property type="protein sequence ID" value="BAG90034.1"/>
    <property type="molecule type" value="mRNA"/>
</dbReference>
<dbReference type="SMR" id="Q6ETL8"/>
<dbReference type="FunCoup" id="Q6ETL8">
    <property type="interactions" value="69"/>
</dbReference>
<dbReference type="STRING" id="39947.Q6ETL8"/>
<dbReference type="PaxDb" id="39947-Q6ETL8"/>
<dbReference type="EnsemblPlants" id="Os02t0178800-01">
    <property type="protein sequence ID" value="Os02t0178800-01"/>
    <property type="gene ID" value="Os02g0178800"/>
</dbReference>
<dbReference type="Gramene" id="Os02t0178800-01">
    <property type="protein sequence ID" value="Os02t0178800-01"/>
    <property type="gene ID" value="Os02g0178800"/>
</dbReference>
<dbReference type="KEGG" id="dosa:Os02g0178800"/>
<dbReference type="KEGG" id="osa:4328496"/>
<dbReference type="eggNOG" id="ENOG502S53G">
    <property type="taxonomic scope" value="Eukaryota"/>
</dbReference>
<dbReference type="HOGENOM" id="CLU_017842_2_0_1"/>
<dbReference type="InParanoid" id="Q6ETL8"/>
<dbReference type="OMA" id="PAQNCKT"/>
<dbReference type="OrthoDB" id="408954at2759"/>
<dbReference type="Proteomes" id="UP000000763">
    <property type="component" value="Chromosome 2"/>
</dbReference>
<dbReference type="Proteomes" id="UP000059680">
    <property type="component" value="Chromosome 2"/>
</dbReference>
<dbReference type="GO" id="GO:0005789">
    <property type="term" value="C:endoplasmic reticulum membrane"/>
    <property type="evidence" value="ECO:0007669"/>
    <property type="project" value="UniProtKB-SubCell"/>
</dbReference>
<dbReference type="GO" id="GO:0071771">
    <property type="term" value="F:aldehyde oxygenase (deformylating) activity"/>
    <property type="evidence" value="ECO:0007669"/>
    <property type="project" value="UniProtKB-EC"/>
</dbReference>
<dbReference type="GO" id="GO:0005506">
    <property type="term" value="F:iron ion binding"/>
    <property type="evidence" value="ECO:0007669"/>
    <property type="project" value="InterPro"/>
</dbReference>
<dbReference type="GO" id="GO:0016491">
    <property type="term" value="F:oxidoreductase activity"/>
    <property type="evidence" value="ECO:0007669"/>
    <property type="project" value="InterPro"/>
</dbReference>
<dbReference type="GO" id="GO:0046184">
    <property type="term" value="P:aldehyde biosynthetic process"/>
    <property type="evidence" value="ECO:0000315"/>
    <property type="project" value="UniProtKB"/>
</dbReference>
<dbReference type="GO" id="GO:0043447">
    <property type="term" value="P:alkane biosynthetic process"/>
    <property type="evidence" value="ECO:0000315"/>
    <property type="project" value="UniProtKB"/>
</dbReference>
<dbReference type="GO" id="GO:0009737">
    <property type="term" value="P:response to abscisic acid"/>
    <property type="evidence" value="ECO:0000270"/>
    <property type="project" value="UniProtKB"/>
</dbReference>
<dbReference type="GO" id="GO:0009414">
    <property type="term" value="P:response to water deprivation"/>
    <property type="evidence" value="ECO:0000270"/>
    <property type="project" value="UniProtKB"/>
</dbReference>
<dbReference type="GO" id="GO:0010025">
    <property type="term" value="P:wax biosynthetic process"/>
    <property type="evidence" value="ECO:0000315"/>
    <property type="project" value="UniProtKB"/>
</dbReference>
<dbReference type="InterPro" id="IPR021940">
    <property type="entry name" value="CER1-like_C"/>
</dbReference>
<dbReference type="InterPro" id="IPR006694">
    <property type="entry name" value="Fatty_acid_hydroxylase"/>
</dbReference>
<dbReference type="InterPro" id="IPR036291">
    <property type="entry name" value="NAD(P)-bd_dom_sf"/>
</dbReference>
<dbReference type="InterPro" id="IPR050307">
    <property type="entry name" value="Sterol_Desaturase_Related"/>
</dbReference>
<dbReference type="PANTHER" id="PTHR11863">
    <property type="entry name" value="STEROL DESATURASE"/>
    <property type="match status" value="1"/>
</dbReference>
<dbReference type="Pfam" id="PF12076">
    <property type="entry name" value="CER1-like_C"/>
    <property type="match status" value="1"/>
</dbReference>
<dbReference type="Pfam" id="PF04116">
    <property type="entry name" value="FA_hydroxylase"/>
    <property type="match status" value="1"/>
</dbReference>
<dbReference type="SUPFAM" id="SSF51735">
    <property type="entry name" value="NAD(P)-binding Rossmann-fold domains"/>
    <property type="match status" value="1"/>
</dbReference>
<name>GLO12_ORYSJ</name>
<reference key="1">
    <citation type="journal article" date="2005" name="Nature">
        <title>The map-based sequence of the rice genome.</title>
        <authorList>
            <consortium name="International rice genome sequencing project (IRGSP)"/>
        </authorList>
    </citation>
    <scope>NUCLEOTIDE SEQUENCE [LARGE SCALE GENOMIC DNA]</scope>
    <source>
        <strain>cv. Nipponbare</strain>
    </source>
</reference>
<reference key="2">
    <citation type="journal article" date="2008" name="Nucleic Acids Res.">
        <title>The rice annotation project database (RAP-DB): 2008 update.</title>
        <authorList>
            <consortium name="The rice annotation project (RAP)"/>
        </authorList>
    </citation>
    <scope>GENOME REANNOTATION</scope>
    <source>
        <strain>cv. Nipponbare</strain>
    </source>
</reference>
<reference key="3">
    <citation type="journal article" date="2013" name="Rice">
        <title>Improvement of the Oryza sativa Nipponbare reference genome using next generation sequence and optical map data.</title>
        <authorList>
            <person name="Kawahara Y."/>
            <person name="de la Bastide M."/>
            <person name="Hamilton J.P."/>
            <person name="Kanamori H."/>
            <person name="McCombie W.R."/>
            <person name="Ouyang S."/>
            <person name="Schwartz D.C."/>
            <person name="Tanaka T."/>
            <person name="Wu J."/>
            <person name="Zhou S."/>
            <person name="Childs K.L."/>
            <person name="Davidson R.M."/>
            <person name="Lin H."/>
            <person name="Quesada-Ocampo L."/>
            <person name="Vaillancourt B."/>
            <person name="Sakai H."/>
            <person name="Lee S.S."/>
            <person name="Kim J."/>
            <person name="Numa H."/>
            <person name="Itoh T."/>
            <person name="Buell C.R."/>
            <person name="Matsumoto T."/>
        </authorList>
    </citation>
    <scope>GENOME REANNOTATION</scope>
    <source>
        <strain>cv. Nipponbare</strain>
    </source>
</reference>
<reference key="4">
    <citation type="journal article" date="2003" name="Science">
        <title>Collection, mapping, and annotation of over 28,000 cDNA clones from japonica rice.</title>
        <authorList>
            <consortium name="The rice full-length cDNA consortium"/>
        </authorList>
    </citation>
    <scope>NUCLEOTIDE SEQUENCE [LARGE SCALE MRNA]</scope>
    <source>
        <strain>cv. Nipponbare</strain>
    </source>
</reference>
<reference key="5">
    <citation type="journal article" date="2009" name="Plant Mol. Biol.">
        <title>Characterization of Glossy1-homologous genes in rice involved in leaf wax accumulation and drought resistance.</title>
        <authorList>
            <person name="Islam M.A."/>
            <person name="Du H."/>
            <person name="Ning J."/>
            <person name="Ye H."/>
            <person name="Xiong L."/>
        </authorList>
    </citation>
    <scope>FUNCTION</scope>
    <scope>DISRUPTION PHENOTYPE</scope>
    <scope>TISSUE SPECIFICITY</scope>
    <scope>INDUCTION BY DROUGHT AND ABSCISIC ACID</scope>
    <scope>GENE FAMILY</scope>
    <scope>NOMENCLATURE</scope>
</reference>
<protein>
    <recommendedName>
        <fullName evidence="5">Very-long-chain aldehyde decarbonylase GL1-2</fullName>
        <ecNumber evidence="1">4.1.99.5</ecNumber>
    </recommendedName>
    <alternativeName>
        <fullName evidence="4">Protein GLOSSY 1-2</fullName>
    </alternativeName>
</protein>
<accession>Q6ETL8</accession>
<accession>A0A0P0VFI0</accession>
<proteinExistence type="evidence at transcript level"/>
<organism>
    <name type="scientific">Oryza sativa subsp. japonica</name>
    <name type="common">Rice</name>
    <dbReference type="NCBI Taxonomy" id="39947"/>
    <lineage>
        <taxon>Eukaryota</taxon>
        <taxon>Viridiplantae</taxon>
        <taxon>Streptophyta</taxon>
        <taxon>Embryophyta</taxon>
        <taxon>Tracheophyta</taxon>
        <taxon>Spermatophyta</taxon>
        <taxon>Magnoliopsida</taxon>
        <taxon>Liliopsida</taxon>
        <taxon>Poales</taxon>
        <taxon>Poaceae</taxon>
        <taxon>BOP clade</taxon>
        <taxon>Oryzoideae</taxon>
        <taxon>Oryzeae</taxon>
        <taxon>Oryzinae</taxon>
        <taxon>Oryza</taxon>
        <taxon>Oryza sativa</taxon>
    </lineage>
</organism>
<gene>
    <name evidence="4" type="primary">GL1-2</name>
    <name evidence="5" type="ordered locus">LOC_Os02g08230</name>
    <name evidence="7" type="ordered locus">Os02g0178800</name>
    <name evidence="8" type="ORF">OSNPB_020178800</name>
    <name evidence="6" type="ORF">P0544B02.10</name>
</gene>
<evidence type="ECO:0000250" key="1">
    <source>
        <dbReference type="UniProtKB" id="F4HVY0"/>
    </source>
</evidence>
<evidence type="ECO:0000255" key="2"/>
<evidence type="ECO:0000269" key="3">
    <source>
    </source>
</evidence>
<evidence type="ECO:0000303" key="4">
    <source>
    </source>
</evidence>
<evidence type="ECO:0000305" key="5"/>
<evidence type="ECO:0000312" key="6">
    <source>
        <dbReference type="EMBL" id="BAD28002.1"/>
    </source>
</evidence>
<evidence type="ECO:0000312" key="7">
    <source>
        <dbReference type="EMBL" id="BAF07994.1"/>
    </source>
</evidence>
<evidence type="ECO:0000312" key="8">
    <source>
        <dbReference type="EMBL" id="BAS77283.1"/>
    </source>
</evidence>
<sequence length="628" mass="71015">MAAPPLSSWPWASLGSYKYVLYGAVVWKVAEEWRQQGAAPVGSWWLHLLLLFAARGLTYQFWFSYGNMLFFTRRRRVVPDSVDFRQVDAEWDWDNFLLLQTLIGATLVGSPAVARQQLLLPSLKQAWDPRGWAIALLLHVLVAEPLFYWAHRALHRAPLFSRYHAAHHHASVTTPLTAGFGTPLESLLLTVVIGVPLAGAFLMGVGSVGLVYGHVLLFDFLRSMGYSNVEVISPRVFQAVPLLRYLIYTPTYLSLHHREKDSNFCLFMPIFDLLGGTLNHKSWELQKEVYLGKNDQAPDFVFLAHVVDIMASMHVPFVLRSCSSTPFANHFVLLPFWPVAFGFMLLMWCCSKTFLVSSYRLRGNLHQMWTVPRYGFQYFIPAAKKGINEQIELAILRADRMGVKVLSLAALNKNEALNGGGTLFVNKHPELRVRVVHGNTLTAAVILNEIPSNVKDVFLTGATSKLGRAIALYLCRKKIRVLMLTLSSERFLKIQREAPAEFQQYLVQVTKYQPAQNCKTWLVGKWLSPREQRWAPAGTHFHQFVVPPIIGFRRDCTYGKLAAMRLPKDVQGLGYCEYTMERGVVHACHAGGVVHFLEGWEHHEVGAIDVDRIDVVWKAALKHGLTPA</sequence>
<feature type="chain" id="PRO_0000445870" description="Very-long-chain aldehyde decarbonylase GL1-2">
    <location>
        <begin position="1"/>
        <end position="628"/>
    </location>
</feature>
<feature type="transmembrane region" description="Helical" evidence="2">
    <location>
        <begin position="37"/>
        <end position="57"/>
    </location>
</feature>
<feature type="transmembrane region" description="Helical" evidence="2">
    <location>
        <begin position="131"/>
        <end position="151"/>
    </location>
</feature>
<feature type="transmembrane region" description="Helical" evidence="2">
    <location>
        <begin position="191"/>
        <end position="211"/>
    </location>
</feature>
<feature type="transmembrane region" description="Helical" evidence="2">
    <location>
        <begin position="299"/>
        <end position="319"/>
    </location>
</feature>
<feature type="transmembrane region" description="Helical" evidence="2">
    <location>
        <begin position="331"/>
        <end position="351"/>
    </location>
</feature>
<feature type="domain" description="Fatty acid hydroxylase" evidence="2">
    <location>
        <begin position="137"/>
        <end position="277"/>
    </location>
</feature>
<comment type="function">
    <text evidence="1 3">Aldehyde decarbonylase involved in the conversion of aldehydes to alkanes. Core component of a very-long-chain alkane synthesis complex (By similarity). Required for the formation of wax layers conferring cuticular permeability and drought tolerance (PubMed:19322663).</text>
</comment>
<comment type="catalytic activity">
    <reaction evidence="1">
        <text>a long-chain fatty aldehyde + 2 NADPH + O2 + H(+) = a long-chain alkane + formate + 2 NADP(+) + H2O</text>
        <dbReference type="Rhea" id="RHEA:21440"/>
        <dbReference type="ChEBI" id="CHEBI:15377"/>
        <dbReference type="ChEBI" id="CHEBI:15378"/>
        <dbReference type="ChEBI" id="CHEBI:15379"/>
        <dbReference type="ChEBI" id="CHEBI:15740"/>
        <dbReference type="ChEBI" id="CHEBI:17176"/>
        <dbReference type="ChEBI" id="CHEBI:57783"/>
        <dbReference type="ChEBI" id="CHEBI:58349"/>
        <dbReference type="ChEBI" id="CHEBI:83563"/>
        <dbReference type="EC" id="4.1.99.5"/>
    </reaction>
</comment>
<comment type="subunit">
    <text evidence="1">Homodimer.</text>
</comment>
<comment type="subcellular location">
    <subcellularLocation>
        <location evidence="1">Endoplasmic reticulum membrane</location>
        <topology evidence="1">Multi-pass membrane protein</topology>
    </subcellularLocation>
</comment>
<comment type="tissue specificity">
    <text evidence="3">Expressed in germinating seeds, radicals and leaves.</text>
</comment>
<comment type="induction">
    <text evidence="3">Induced by drought and abscisic acid (ABA).</text>
</comment>
<comment type="disruption phenotype">
    <text evidence="3">Early leaf-rolling at the reproductive stage. Reduced wax accumulation (lower total proportions of aldehydes, fatty acids, alkanes and alcohol) in leaf cuticle leading to an increased cuticular permeability (e.g. chlorophyll leaching) and a subsequent altered drought resistance due to rapid water loss.</text>
</comment>
<comment type="similarity">
    <text evidence="5">Belongs to the sterol desaturase family.</text>
</comment>